<accession>Q95NR9</accession>
<accession>P02596</accession>
<dbReference type="EMBL" id="AB063181">
    <property type="protein sequence ID" value="BAB61794.1"/>
    <property type="molecule type" value="mRNA"/>
</dbReference>
<dbReference type="EMBL" id="AB063183">
    <property type="protein sequence ID" value="BAB61796.1"/>
    <property type="molecule type" value="Genomic_DNA"/>
</dbReference>
<dbReference type="PIR" id="A90223">
    <property type="entry name" value="MCXAM"/>
</dbReference>
<dbReference type="SMR" id="Q95NR9"/>
<dbReference type="iPTMnet" id="Q95NR9"/>
<dbReference type="GO" id="GO:0016460">
    <property type="term" value="C:myosin II complex"/>
    <property type="evidence" value="ECO:0007669"/>
    <property type="project" value="TreeGrafter"/>
</dbReference>
<dbReference type="GO" id="GO:0005509">
    <property type="term" value="F:calcium ion binding"/>
    <property type="evidence" value="ECO:0007669"/>
    <property type="project" value="InterPro"/>
</dbReference>
<dbReference type="CDD" id="cd00051">
    <property type="entry name" value="EFh"/>
    <property type="match status" value="2"/>
</dbReference>
<dbReference type="FunFam" id="1.10.238.10:FF:000527">
    <property type="entry name" value="Calmodulin-3"/>
    <property type="match status" value="1"/>
</dbReference>
<dbReference type="Gene3D" id="1.10.238.10">
    <property type="entry name" value="EF-hand"/>
    <property type="match status" value="3"/>
</dbReference>
<dbReference type="InterPro" id="IPR050230">
    <property type="entry name" value="CALM/Myosin/TropC-like"/>
</dbReference>
<dbReference type="InterPro" id="IPR011992">
    <property type="entry name" value="EF-hand-dom_pair"/>
</dbReference>
<dbReference type="InterPro" id="IPR018247">
    <property type="entry name" value="EF_Hand_1_Ca_BS"/>
</dbReference>
<dbReference type="InterPro" id="IPR002048">
    <property type="entry name" value="EF_hand_dom"/>
</dbReference>
<dbReference type="PANTHER" id="PTHR23048:SF0">
    <property type="entry name" value="CALMODULIN LIKE 3"/>
    <property type="match status" value="1"/>
</dbReference>
<dbReference type="PANTHER" id="PTHR23048">
    <property type="entry name" value="MYOSIN LIGHT CHAIN 1, 3"/>
    <property type="match status" value="1"/>
</dbReference>
<dbReference type="Pfam" id="PF13499">
    <property type="entry name" value="EF-hand_7"/>
    <property type="match status" value="2"/>
</dbReference>
<dbReference type="SMART" id="SM00054">
    <property type="entry name" value="EFh"/>
    <property type="match status" value="4"/>
</dbReference>
<dbReference type="SUPFAM" id="SSF47473">
    <property type="entry name" value="EF-hand"/>
    <property type="match status" value="1"/>
</dbReference>
<dbReference type="PROSITE" id="PS00018">
    <property type="entry name" value="EF_HAND_1"/>
    <property type="match status" value="4"/>
</dbReference>
<dbReference type="PROSITE" id="PS50222">
    <property type="entry name" value="EF_HAND_2"/>
    <property type="match status" value="4"/>
</dbReference>
<name>CALM_METSE</name>
<sequence>MADQLTEEQIAEFKEAFSLFDKDGDGTITTKELGTVMRSLGQNPTEAELQDMINEVDADGNGTIDFPEFLTMMARKMKDTDSEEEIREAFRVFDKDGNGFISAAELRHVMTNLGEKLTDEEVDEMIREADIDGDGQVNYEEFVKMMTSK</sequence>
<reference key="1">
    <citation type="journal article" date="2001" name="Gene">
        <title>Structural organization of lower marine nonvertebrate calmodulin genes.</title>
        <authorList>
            <person name="Yuasa H.J."/>
            <person name="Suzuki T."/>
            <person name="Yazawa M."/>
        </authorList>
    </citation>
    <scope>NUCLEOTIDE SEQUENCE [GENOMIC DNA / MRNA]</scope>
</reference>
<reference key="2">
    <citation type="journal article" date="1980" name="Biochem. Biophys. Res. Commun.">
        <title>The amino acid sequence of the calmodulin obtained from sea anemone (Metridium senile) muscle.</title>
        <authorList>
            <person name="Takagi T."/>
            <person name="Nemoto T."/>
            <person name="Konishi K."/>
            <person name="Yazawa M."/>
            <person name="Yagi K."/>
        </authorList>
    </citation>
    <scope>PROTEIN SEQUENCE OF 2-149</scope>
    <scope>ACETYLATION AT ALA-2</scope>
    <scope>METHYLATION AT LYS-116</scope>
</reference>
<feature type="initiator methionine" description="Removed" evidence="2">
    <location>
        <position position="1"/>
    </location>
</feature>
<feature type="chain" id="PRO_0000198259" description="Calmodulin">
    <location>
        <begin position="2"/>
        <end position="149"/>
    </location>
</feature>
<feature type="domain" description="EF-hand 1" evidence="1">
    <location>
        <begin position="8"/>
        <end position="43"/>
    </location>
</feature>
<feature type="domain" description="EF-hand 2" evidence="1">
    <location>
        <begin position="44"/>
        <end position="79"/>
    </location>
</feature>
<feature type="domain" description="EF-hand 3" evidence="1">
    <location>
        <begin position="81"/>
        <end position="116"/>
    </location>
</feature>
<feature type="domain" description="EF-hand 4" evidence="1">
    <location>
        <begin position="117"/>
        <end position="149"/>
    </location>
</feature>
<feature type="binding site" evidence="1">
    <location>
        <position position="21"/>
    </location>
    <ligand>
        <name>Ca(2+)</name>
        <dbReference type="ChEBI" id="CHEBI:29108"/>
        <label>1</label>
    </ligand>
</feature>
<feature type="binding site" evidence="1">
    <location>
        <position position="23"/>
    </location>
    <ligand>
        <name>Ca(2+)</name>
        <dbReference type="ChEBI" id="CHEBI:29108"/>
        <label>1</label>
    </ligand>
</feature>
<feature type="binding site" evidence="1">
    <location>
        <position position="25"/>
    </location>
    <ligand>
        <name>Ca(2+)</name>
        <dbReference type="ChEBI" id="CHEBI:29108"/>
        <label>1</label>
    </ligand>
</feature>
<feature type="binding site" evidence="1">
    <location>
        <position position="27"/>
    </location>
    <ligand>
        <name>Ca(2+)</name>
        <dbReference type="ChEBI" id="CHEBI:29108"/>
        <label>1</label>
    </ligand>
</feature>
<feature type="binding site" evidence="1">
    <location>
        <position position="32"/>
    </location>
    <ligand>
        <name>Ca(2+)</name>
        <dbReference type="ChEBI" id="CHEBI:29108"/>
        <label>1</label>
    </ligand>
</feature>
<feature type="binding site" evidence="1">
    <location>
        <position position="57"/>
    </location>
    <ligand>
        <name>Ca(2+)</name>
        <dbReference type="ChEBI" id="CHEBI:29108"/>
        <label>2</label>
    </ligand>
</feature>
<feature type="binding site" evidence="1">
    <location>
        <position position="59"/>
    </location>
    <ligand>
        <name>Ca(2+)</name>
        <dbReference type="ChEBI" id="CHEBI:29108"/>
        <label>2</label>
    </ligand>
</feature>
<feature type="binding site" evidence="1">
    <location>
        <position position="61"/>
    </location>
    <ligand>
        <name>Ca(2+)</name>
        <dbReference type="ChEBI" id="CHEBI:29108"/>
        <label>2</label>
    </ligand>
</feature>
<feature type="binding site" evidence="1">
    <location>
        <position position="63"/>
    </location>
    <ligand>
        <name>Ca(2+)</name>
        <dbReference type="ChEBI" id="CHEBI:29108"/>
        <label>2</label>
    </ligand>
</feature>
<feature type="binding site" evidence="1">
    <location>
        <position position="68"/>
    </location>
    <ligand>
        <name>Ca(2+)</name>
        <dbReference type="ChEBI" id="CHEBI:29108"/>
        <label>2</label>
    </ligand>
</feature>
<feature type="binding site" evidence="1">
    <location>
        <position position="94"/>
    </location>
    <ligand>
        <name>Ca(2+)</name>
        <dbReference type="ChEBI" id="CHEBI:29108"/>
        <label>3</label>
    </ligand>
</feature>
<feature type="binding site" evidence="1">
    <location>
        <position position="96"/>
    </location>
    <ligand>
        <name>Ca(2+)</name>
        <dbReference type="ChEBI" id="CHEBI:29108"/>
        <label>3</label>
    </ligand>
</feature>
<feature type="binding site" evidence="1">
    <location>
        <position position="98"/>
    </location>
    <ligand>
        <name>Ca(2+)</name>
        <dbReference type="ChEBI" id="CHEBI:29108"/>
        <label>3</label>
    </ligand>
</feature>
<feature type="binding site" evidence="1">
    <location>
        <position position="105"/>
    </location>
    <ligand>
        <name>Ca(2+)</name>
        <dbReference type="ChEBI" id="CHEBI:29108"/>
        <label>3</label>
    </ligand>
</feature>
<feature type="binding site" evidence="1">
    <location>
        <position position="130"/>
    </location>
    <ligand>
        <name>Ca(2+)</name>
        <dbReference type="ChEBI" id="CHEBI:29108"/>
        <label>4</label>
    </ligand>
</feature>
<feature type="binding site" evidence="1">
    <location>
        <position position="132"/>
    </location>
    <ligand>
        <name>Ca(2+)</name>
        <dbReference type="ChEBI" id="CHEBI:29108"/>
        <label>4</label>
    </ligand>
</feature>
<feature type="binding site" evidence="1">
    <location>
        <position position="134"/>
    </location>
    <ligand>
        <name>Ca(2+)</name>
        <dbReference type="ChEBI" id="CHEBI:29108"/>
        <label>4</label>
    </ligand>
</feature>
<feature type="binding site" evidence="1">
    <location>
        <position position="136"/>
    </location>
    <ligand>
        <name>Ca(2+)</name>
        <dbReference type="ChEBI" id="CHEBI:29108"/>
        <label>4</label>
    </ligand>
</feature>
<feature type="binding site" evidence="1">
    <location>
        <position position="141"/>
    </location>
    <ligand>
        <name>Ca(2+)</name>
        <dbReference type="ChEBI" id="CHEBI:29108"/>
        <label>4</label>
    </ligand>
</feature>
<feature type="modified residue" description="N-acetylalanine" evidence="4">
    <location>
        <position position="2"/>
    </location>
</feature>
<feature type="modified residue" description="N6,N6,N6-trimethyllysine" evidence="2">
    <location>
        <position position="116"/>
    </location>
</feature>
<feature type="sequence conflict" description="In Ref. 2; AA sequence." evidence="3" ref="2">
    <original>N</original>
    <variation>D</variation>
    <location>
        <position position="61"/>
    </location>
</feature>
<feature type="sequence conflict" description="In Ref. 2; AA sequence." evidence="3" ref="2">
    <original>N</original>
    <variation>D</variation>
    <location>
        <position position="98"/>
    </location>
</feature>
<keyword id="KW-0007">Acetylation</keyword>
<keyword id="KW-0106">Calcium</keyword>
<keyword id="KW-0903">Direct protein sequencing</keyword>
<keyword id="KW-0479">Metal-binding</keyword>
<keyword id="KW-0488">Methylation</keyword>
<keyword id="KW-0677">Repeat</keyword>
<protein>
    <recommendedName>
        <fullName>Calmodulin</fullName>
        <shortName>CaM</shortName>
    </recommendedName>
</protein>
<evidence type="ECO:0000255" key="1">
    <source>
        <dbReference type="PROSITE-ProRule" id="PRU00448"/>
    </source>
</evidence>
<evidence type="ECO:0000269" key="2">
    <source>
    </source>
</evidence>
<evidence type="ECO:0000305" key="3"/>
<evidence type="ECO:0000305" key="4">
    <source>
    </source>
</evidence>
<proteinExistence type="evidence at protein level"/>
<organism>
    <name type="scientific">Metridium senile</name>
    <name type="common">Brown sea anemone</name>
    <name type="synonym">Frilled sea anemone</name>
    <dbReference type="NCBI Taxonomy" id="6116"/>
    <lineage>
        <taxon>Eukaryota</taxon>
        <taxon>Metazoa</taxon>
        <taxon>Cnidaria</taxon>
        <taxon>Anthozoa</taxon>
        <taxon>Hexacorallia</taxon>
        <taxon>Actiniaria</taxon>
        <taxon>Nynantheae</taxon>
        <taxon>Metridiidae</taxon>
        <taxon>Metridium</taxon>
    </lineage>
</organism>
<comment type="function">
    <text>Calmodulin mediates the control of a large number of enzymes, ion channels and other proteins by Ca(2+). Among the enzymes to be stimulated by the calmodulin-Ca(2+) complex are a number of protein kinases and phosphatases.</text>
</comment>
<comment type="miscellaneous">
    <text>This protein has four functional calcium-binding sites.</text>
</comment>
<comment type="similarity">
    <text evidence="3">Belongs to the calmodulin family.</text>
</comment>